<gene>
    <name type="primary">tmem167a</name>
    <name type="synonym">tmem167</name>
    <name type="ORF">zgc:112458</name>
</gene>
<name>KISHA_DANRE</name>
<evidence type="ECO:0000250" key="1"/>
<evidence type="ECO:0000255" key="2"/>
<evidence type="ECO:0000305" key="3"/>
<accession>Q5BJC2</accession>
<organism>
    <name type="scientific">Danio rerio</name>
    <name type="common">Zebrafish</name>
    <name type="synonym">Brachydanio rerio</name>
    <dbReference type="NCBI Taxonomy" id="7955"/>
    <lineage>
        <taxon>Eukaryota</taxon>
        <taxon>Metazoa</taxon>
        <taxon>Chordata</taxon>
        <taxon>Craniata</taxon>
        <taxon>Vertebrata</taxon>
        <taxon>Euteleostomi</taxon>
        <taxon>Actinopterygii</taxon>
        <taxon>Neopterygii</taxon>
        <taxon>Teleostei</taxon>
        <taxon>Ostariophysi</taxon>
        <taxon>Cypriniformes</taxon>
        <taxon>Danionidae</taxon>
        <taxon>Danioninae</taxon>
        <taxon>Danio</taxon>
    </lineage>
</organism>
<proteinExistence type="inferred from homology"/>
<keyword id="KW-0325">Glycoprotein</keyword>
<keyword id="KW-0333">Golgi apparatus</keyword>
<keyword id="KW-0472">Membrane</keyword>
<keyword id="KW-1185">Reference proteome</keyword>
<keyword id="KW-0732">Signal</keyword>
<keyword id="KW-0812">Transmembrane</keyword>
<keyword id="KW-1133">Transmembrane helix</keyword>
<protein>
    <recommendedName>
        <fullName>Protein kish-A</fullName>
    </recommendedName>
    <alternativeName>
        <fullName>Transmembrane protein 167</fullName>
    </alternativeName>
    <alternativeName>
        <fullName>Transmembrane protein 167A</fullName>
    </alternativeName>
</protein>
<comment type="function">
    <text evidence="1">Involved in the early part of the secretory pathway.</text>
</comment>
<comment type="subcellular location">
    <subcellularLocation>
        <location evidence="1">Golgi apparatus membrane</location>
        <topology evidence="1">Single-pass type I membrane protein</topology>
    </subcellularLocation>
</comment>
<comment type="similarity">
    <text evidence="3">Belongs to the KISH family.</text>
</comment>
<dbReference type="EMBL" id="BC091541">
    <property type="protein sequence ID" value="AAH91541.1"/>
    <property type="molecule type" value="mRNA"/>
</dbReference>
<dbReference type="RefSeq" id="NP_001018875.2">
    <property type="nucleotide sequence ID" value="NM_001023581.2"/>
</dbReference>
<dbReference type="FunCoup" id="Q5BJC2">
    <property type="interactions" value="1351"/>
</dbReference>
<dbReference type="STRING" id="7955.ENSDARP00000084398"/>
<dbReference type="GlyCosmos" id="Q5BJC2">
    <property type="glycosylation" value="1 site, No reported glycans"/>
</dbReference>
<dbReference type="PaxDb" id="7955-ENSDARP00000118932"/>
<dbReference type="GeneID" id="541340"/>
<dbReference type="KEGG" id="dre:541340"/>
<dbReference type="AGR" id="ZFIN:ZDB-GENE-050320-29"/>
<dbReference type="CTD" id="153339"/>
<dbReference type="ZFIN" id="ZDB-GENE-050320-29">
    <property type="gene designation" value="tmem167a"/>
</dbReference>
<dbReference type="eggNOG" id="KOG3808">
    <property type="taxonomic scope" value="Eukaryota"/>
</dbReference>
<dbReference type="InParanoid" id="Q5BJC2"/>
<dbReference type="OrthoDB" id="10034655at2759"/>
<dbReference type="PhylomeDB" id="Q5BJC2"/>
<dbReference type="PRO" id="PR:Q5BJC2"/>
<dbReference type="Proteomes" id="UP000000437">
    <property type="component" value="Chromosome 10"/>
</dbReference>
<dbReference type="GO" id="GO:0000139">
    <property type="term" value="C:Golgi membrane"/>
    <property type="evidence" value="ECO:0007669"/>
    <property type="project" value="UniProtKB-SubCell"/>
</dbReference>
<dbReference type="GO" id="GO:0046907">
    <property type="term" value="P:intracellular transport"/>
    <property type="evidence" value="ECO:0000318"/>
    <property type="project" value="GO_Central"/>
</dbReference>
<dbReference type="GO" id="GO:0009306">
    <property type="term" value="P:protein secretion"/>
    <property type="evidence" value="ECO:0000318"/>
    <property type="project" value="GO_Central"/>
</dbReference>
<dbReference type="InterPro" id="IPR051523">
    <property type="entry name" value="KISH_domain"/>
</dbReference>
<dbReference type="InterPro" id="IPR009653">
    <property type="entry name" value="Ksh1"/>
</dbReference>
<dbReference type="PANTHER" id="PTHR13229">
    <property type="entry name" value="PROTEIN KISH-A"/>
    <property type="match status" value="1"/>
</dbReference>
<dbReference type="Pfam" id="PF06842">
    <property type="entry name" value="DUF1242"/>
    <property type="match status" value="1"/>
</dbReference>
<feature type="signal peptide" evidence="2">
    <location>
        <begin position="1"/>
        <end position="26"/>
    </location>
</feature>
<feature type="chain" id="PRO_0000247772" description="Protein kish-A">
    <location>
        <begin position="27"/>
        <end position="72"/>
    </location>
</feature>
<feature type="topological domain" description="Extracellular" evidence="2">
    <location>
        <begin position="27"/>
        <end position="53"/>
    </location>
</feature>
<feature type="transmembrane region" description="Helical" evidence="2">
    <location>
        <begin position="54"/>
        <end position="71"/>
    </location>
</feature>
<feature type="topological domain" description="Cytoplasmic" evidence="2">
    <location>
        <position position="72"/>
    </location>
</feature>
<feature type="glycosylation site" description="N-linked (GlcNAc...) asparagine" evidence="2">
    <location>
        <position position="35"/>
    </location>
</feature>
<reference key="1">
    <citation type="submission" date="2005-03" db="EMBL/GenBank/DDBJ databases">
        <authorList>
            <consortium name="NIH - Zebrafish Gene Collection (ZGC) project"/>
        </authorList>
    </citation>
    <scope>NUCLEOTIDE SEQUENCE [LARGE SCALE MRNA]</scope>
    <source>
        <tissue>Olfactory epithelium</tissue>
    </source>
</reference>
<sequence>MSAIFNFQSLLTVILLLICTCAYIRSLTPSLLDKNKTGFLGIFWKCARIGERKSPYVAFCCIVMALTILFSE</sequence>